<keyword id="KW-0472">Membrane</keyword>
<keyword id="KW-0520">NAD</keyword>
<keyword id="KW-0560">Oxidoreductase</keyword>
<keyword id="KW-1185">Reference proteome</keyword>
<keyword id="KW-0812">Transmembrane</keyword>
<keyword id="KW-1133">Transmembrane helix</keyword>
<comment type="subcellular location">
    <subcellularLocation>
        <location evidence="4">Membrane</location>
        <topology evidence="4">Multi-pass membrane protein</topology>
    </subcellularLocation>
</comment>
<comment type="similarity">
    <text evidence="4">Belongs to the 3-beta-HSD family.</text>
</comment>
<comment type="sequence caution" evidence="4">
    <conflict type="erroneous initiation">
        <sequence resource="EMBL-CDS" id="AAH18550"/>
    </conflict>
</comment>
<dbReference type="EC" id="1.1.1.-"/>
<dbReference type="EMBL" id="AK014586">
    <property type="protein sequence ID" value="BAB29446.1"/>
    <property type="molecule type" value="mRNA"/>
</dbReference>
<dbReference type="EMBL" id="BC018550">
    <property type="protein sequence ID" value="AAH18550.1"/>
    <property type="status" value="ALT_INIT"/>
    <property type="molecule type" value="mRNA"/>
</dbReference>
<dbReference type="EMBL" id="BC038819">
    <property type="protein sequence ID" value="AAH38819.1"/>
    <property type="molecule type" value="mRNA"/>
</dbReference>
<dbReference type="CCDS" id="CCDS22701.1"/>
<dbReference type="RefSeq" id="NP_001344201.1">
    <property type="nucleotide sequence ID" value="NM_001357272.1"/>
</dbReference>
<dbReference type="RefSeq" id="NP_001344202.1">
    <property type="nucleotide sequence ID" value="NM_001357273.1"/>
</dbReference>
<dbReference type="RefSeq" id="NP_083001.1">
    <property type="nucleotide sequence ID" value="NM_028725.4"/>
</dbReference>
<dbReference type="RefSeq" id="XP_006531470.2">
    <property type="nucleotide sequence ID" value="XM_006531407.3"/>
</dbReference>
<dbReference type="RefSeq" id="XP_006531471.1">
    <property type="nucleotide sequence ID" value="XM_006531408.2"/>
</dbReference>
<dbReference type="RefSeq" id="XP_006531472.1">
    <property type="nucleotide sequence ID" value="XM_006531409.3"/>
</dbReference>
<dbReference type="SMR" id="Q9D665"/>
<dbReference type="STRING" id="10090.ENSMUSP00000044457"/>
<dbReference type="iPTMnet" id="Q9D665"/>
<dbReference type="PhosphoSitePlus" id="Q9D665"/>
<dbReference type="PaxDb" id="10090-ENSMUSP00000044457"/>
<dbReference type="ProteomicsDB" id="285410"/>
<dbReference type="Antibodypedia" id="3063">
    <property type="antibodies" value="17 antibodies from 12 providers"/>
</dbReference>
<dbReference type="DNASU" id="74032"/>
<dbReference type="Ensembl" id="ENSMUST00000037955.14">
    <property type="protein sequence ID" value="ENSMUSP00000044457.8"/>
    <property type="gene ID" value="ENSMUSG00000034308.14"/>
</dbReference>
<dbReference type="Ensembl" id="ENSMUST00000173522.8">
    <property type="protein sequence ID" value="ENSMUSP00000133782.2"/>
    <property type="gene ID" value="ENSMUSG00000034308.14"/>
</dbReference>
<dbReference type="GeneID" id="74032"/>
<dbReference type="KEGG" id="mmu:74032"/>
<dbReference type="UCSC" id="uc009npd.1">
    <property type="organism name" value="mouse"/>
</dbReference>
<dbReference type="AGR" id="MGI:1921282"/>
<dbReference type="CTD" id="93517"/>
<dbReference type="MGI" id="MGI:1921282">
    <property type="gene designation" value="Sdr42e1"/>
</dbReference>
<dbReference type="VEuPathDB" id="HostDB:ENSMUSG00000034308"/>
<dbReference type="eggNOG" id="KOG1430">
    <property type="taxonomic scope" value="Eukaryota"/>
</dbReference>
<dbReference type="GeneTree" id="ENSGT00940000158070"/>
<dbReference type="InParanoid" id="Q9D665"/>
<dbReference type="OMA" id="IGAYKRS"/>
<dbReference type="OrthoDB" id="2735536at2759"/>
<dbReference type="PhylomeDB" id="Q9D665"/>
<dbReference type="TreeFam" id="TF313574"/>
<dbReference type="BioGRID-ORCS" id="74032">
    <property type="hits" value="4 hits in 78 CRISPR screens"/>
</dbReference>
<dbReference type="ChiTaRS" id="Sdr42e1">
    <property type="organism name" value="mouse"/>
</dbReference>
<dbReference type="PRO" id="PR:Q9D665"/>
<dbReference type="Proteomes" id="UP000000589">
    <property type="component" value="Chromosome 8"/>
</dbReference>
<dbReference type="RNAct" id="Q9D665">
    <property type="molecule type" value="protein"/>
</dbReference>
<dbReference type="Bgee" id="ENSMUSG00000034308">
    <property type="expression patterns" value="Expressed in urinary bladder urothelium and 127 other cell types or tissues"/>
</dbReference>
<dbReference type="ExpressionAtlas" id="Q9D665">
    <property type="expression patterns" value="baseline and differential"/>
</dbReference>
<dbReference type="GO" id="GO:0016020">
    <property type="term" value="C:membrane"/>
    <property type="evidence" value="ECO:0007669"/>
    <property type="project" value="UniProtKB-SubCell"/>
</dbReference>
<dbReference type="GO" id="GO:0016616">
    <property type="term" value="F:oxidoreductase activity, acting on the CH-OH group of donors, NAD or NADP as acceptor"/>
    <property type="evidence" value="ECO:0007669"/>
    <property type="project" value="InterPro"/>
</dbReference>
<dbReference type="GO" id="GO:0006694">
    <property type="term" value="P:steroid biosynthetic process"/>
    <property type="evidence" value="ECO:0007669"/>
    <property type="project" value="InterPro"/>
</dbReference>
<dbReference type="FunFam" id="3.40.50.720:FF:000138">
    <property type="entry name" value="Short-chain dehydrogenase/reductase family 42E member 1"/>
    <property type="match status" value="1"/>
</dbReference>
<dbReference type="Gene3D" id="3.40.50.720">
    <property type="entry name" value="NAD(P)-binding Rossmann-like Domain"/>
    <property type="match status" value="1"/>
</dbReference>
<dbReference type="InterPro" id="IPR002225">
    <property type="entry name" value="3Beta_OHSteriod_DH/Estase"/>
</dbReference>
<dbReference type="InterPro" id="IPR050177">
    <property type="entry name" value="Lipid_A_modif_metabolic_enz"/>
</dbReference>
<dbReference type="InterPro" id="IPR036291">
    <property type="entry name" value="NAD(P)-bd_dom_sf"/>
</dbReference>
<dbReference type="PANTHER" id="PTHR43245">
    <property type="entry name" value="BIFUNCTIONAL POLYMYXIN RESISTANCE PROTEIN ARNA"/>
    <property type="match status" value="1"/>
</dbReference>
<dbReference type="PANTHER" id="PTHR43245:SF51">
    <property type="entry name" value="SHORT CHAIN DEHYDROGENASE_REDUCTASE FAMILY 42E, MEMBER 2"/>
    <property type="match status" value="1"/>
</dbReference>
<dbReference type="Pfam" id="PF01073">
    <property type="entry name" value="3Beta_HSD"/>
    <property type="match status" value="1"/>
</dbReference>
<dbReference type="SUPFAM" id="SSF51735">
    <property type="entry name" value="NAD(P)-binding Rossmann-fold domains"/>
    <property type="match status" value="1"/>
</dbReference>
<name>D42E1_MOUSE</name>
<sequence>MDSPRFPEETVLITGGGGYFGFRLGCALNQKGARVILFDITQPAQNLPEGIKFVCGDIRCLADVETAFQDAEKVACVFHVASYGMSGREQLNKTQIEEVNVGGTENILRACLERGVPRLVYTSTFNVIFGGQVIRNGDESLPYLPLHLHPDHYSRTKSIAEKKVLEANGLAFKQGDGILRTCAIRPAGIYGAGEQRHLPRIVSYIERGLFRFVYGDPQSLVEFVHVDNLAKAHILASEALKADKGHVASGQPYFISDGRPVNNFEFFRPLVEGLGYTFPSTRLPLTLIYCLAFLVEMTHFIVGRLYNFQPFLTRTEVYKTGVTHYFSLEKAKKELGFEPQPFDLQEVVEWFKAHGHGRGAAGQDSEFMLWDGILILLLALSVLTWILPSTTLSI</sequence>
<evidence type="ECO:0000250" key="1"/>
<evidence type="ECO:0000250" key="2">
    <source>
        <dbReference type="UniProtKB" id="Q8WUS8"/>
    </source>
</evidence>
<evidence type="ECO:0000255" key="3"/>
<evidence type="ECO:0000305" key="4"/>
<protein>
    <recommendedName>
        <fullName evidence="2">Short-chain dehydrogenase/reductase family 42E member 1</fullName>
        <ecNumber>1.1.1.-</ecNumber>
    </recommendedName>
</protein>
<accession>Q9D665</accession>
<accession>Q8VCV0</accession>
<organism>
    <name type="scientific">Mus musculus</name>
    <name type="common">Mouse</name>
    <dbReference type="NCBI Taxonomy" id="10090"/>
    <lineage>
        <taxon>Eukaryota</taxon>
        <taxon>Metazoa</taxon>
        <taxon>Chordata</taxon>
        <taxon>Craniata</taxon>
        <taxon>Vertebrata</taxon>
        <taxon>Euteleostomi</taxon>
        <taxon>Mammalia</taxon>
        <taxon>Eutheria</taxon>
        <taxon>Euarchontoglires</taxon>
        <taxon>Glires</taxon>
        <taxon>Rodentia</taxon>
        <taxon>Myomorpha</taxon>
        <taxon>Muroidea</taxon>
        <taxon>Muridae</taxon>
        <taxon>Murinae</taxon>
        <taxon>Mus</taxon>
        <taxon>Mus</taxon>
    </lineage>
</organism>
<proteinExistence type="evidence at protein level"/>
<feature type="chain" id="PRO_0000331756" description="Short-chain dehydrogenase/reductase family 42E member 1">
    <location>
        <begin position="1"/>
        <end position="394"/>
    </location>
</feature>
<feature type="transmembrane region" description="Helical" evidence="3">
    <location>
        <begin position="283"/>
        <end position="303"/>
    </location>
</feature>
<feature type="transmembrane region" description="Helical" evidence="3">
    <location>
        <begin position="367"/>
        <end position="387"/>
    </location>
</feature>
<feature type="active site" description="Proton acceptor" evidence="1">
    <location>
        <position position="153"/>
    </location>
</feature>
<feature type="binding site" evidence="1">
    <location>
        <position position="157"/>
    </location>
    <ligand>
        <name>NAD(+)</name>
        <dbReference type="ChEBI" id="CHEBI:57540"/>
    </ligand>
</feature>
<reference key="1">
    <citation type="journal article" date="2005" name="Science">
        <title>The transcriptional landscape of the mammalian genome.</title>
        <authorList>
            <person name="Carninci P."/>
            <person name="Kasukawa T."/>
            <person name="Katayama S."/>
            <person name="Gough J."/>
            <person name="Frith M.C."/>
            <person name="Maeda N."/>
            <person name="Oyama R."/>
            <person name="Ravasi T."/>
            <person name="Lenhard B."/>
            <person name="Wells C."/>
            <person name="Kodzius R."/>
            <person name="Shimokawa K."/>
            <person name="Bajic V.B."/>
            <person name="Brenner S.E."/>
            <person name="Batalov S."/>
            <person name="Forrest A.R."/>
            <person name="Zavolan M."/>
            <person name="Davis M.J."/>
            <person name="Wilming L.G."/>
            <person name="Aidinis V."/>
            <person name="Allen J.E."/>
            <person name="Ambesi-Impiombato A."/>
            <person name="Apweiler R."/>
            <person name="Aturaliya R.N."/>
            <person name="Bailey T.L."/>
            <person name="Bansal M."/>
            <person name="Baxter L."/>
            <person name="Beisel K.W."/>
            <person name="Bersano T."/>
            <person name="Bono H."/>
            <person name="Chalk A.M."/>
            <person name="Chiu K.P."/>
            <person name="Choudhary V."/>
            <person name="Christoffels A."/>
            <person name="Clutterbuck D.R."/>
            <person name="Crowe M.L."/>
            <person name="Dalla E."/>
            <person name="Dalrymple B.P."/>
            <person name="de Bono B."/>
            <person name="Della Gatta G."/>
            <person name="di Bernardo D."/>
            <person name="Down T."/>
            <person name="Engstrom P."/>
            <person name="Fagiolini M."/>
            <person name="Faulkner G."/>
            <person name="Fletcher C.F."/>
            <person name="Fukushima T."/>
            <person name="Furuno M."/>
            <person name="Futaki S."/>
            <person name="Gariboldi M."/>
            <person name="Georgii-Hemming P."/>
            <person name="Gingeras T.R."/>
            <person name="Gojobori T."/>
            <person name="Green R.E."/>
            <person name="Gustincich S."/>
            <person name="Harbers M."/>
            <person name="Hayashi Y."/>
            <person name="Hensch T.K."/>
            <person name="Hirokawa N."/>
            <person name="Hill D."/>
            <person name="Huminiecki L."/>
            <person name="Iacono M."/>
            <person name="Ikeo K."/>
            <person name="Iwama A."/>
            <person name="Ishikawa T."/>
            <person name="Jakt M."/>
            <person name="Kanapin A."/>
            <person name="Katoh M."/>
            <person name="Kawasawa Y."/>
            <person name="Kelso J."/>
            <person name="Kitamura H."/>
            <person name="Kitano H."/>
            <person name="Kollias G."/>
            <person name="Krishnan S.P."/>
            <person name="Kruger A."/>
            <person name="Kummerfeld S.K."/>
            <person name="Kurochkin I.V."/>
            <person name="Lareau L.F."/>
            <person name="Lazarevic D."/>
            <person name="Lipovich L."/>
            <person name="Liu J."/>
            <person name="Liuni S."/>
            <person name="McWilliam S."/>
            <person name="Madan Babu M."/>
            <person name="Madera M."/>
            <person name="Marchionni L."/>
            <person name="Matsuda H."/>
            <person name="Matsuzawa S."/>
            <person name="Miki H."/>
            <person name="Mignone F."/>
            <person name="Miyake S."/>
            <person name="Morris K."/>
            <person name="Mottagui-Tabar S."/>
            <person name="Mulder N."/>
            <person name="Nakano N."/>
            <person name="Nakauchi H."/>
            <person name="Ng P."/>
            <person name="Nilsson R."/>
            <person name="Nishiguchi S."/>
            <person name="Nishikawa S."/>
            <person name="Nori F."/>
            <person name="Ohara O."/>
            <person name="Okazaki Y."/>
            <person name="Orlando V."/>
            <person name="Pang K.C."/>
            <person name="Pavan W.J."/>
            <person name="Pavesi G."/>
            <person name="Pesole G."/>
            <person name="Petrovsky N."/>
            <person name="Piazza S."/>
            <person name="Reed J."/>
            <person name="Reid J.F."/>
            <person name="Ring B.Z."/>
            <person name="Ringwald M."/>
            <person name="Rost B."/>
            <person name="Ruan Y."/>
            <person name="Salzberg S.L."/>
            <person name="Sandelin A."/>
            <person name="Schneider C."/>
            <person name="Schoenbach C."/>
            <person name="Sekiguchi K."/>
            <person name="Semple C.A."/>
            <person name="Seno S."/>
            <person name="Sessa L."/>
            <person name="Sheng Y."/>
            <person name="Shibata Y."/>
            <person name="Shimada H."/>
            <person name="Shimada K."/>
            <person name="Silva D."/>
            <person name="Sinclair B."/>
            <person name="Sperling S."/>
            <person name="Stupka E."/>
            <person name="Sugiura K."/>
            <person name="Sultana R."/>
            <person name="Takenaka Y."/>
            <person name="Taki K."/>
            <person name="Tammoja K."/>
            <person name="Tan S.L."/>
            <person name="Tang S."/>
            <person name="Taylor M.S."/>
            <person name="Tegner J."/>
            <person name="Teichmann S.A."/>
            <person name="Ueda H.R."/>
            <person name="van Nimwegen E."/>
            <person name="Verardo R."/>
            <person name="Wei C.L."/>
            <person name="Yagi K."/>
            <person name="Yamanishi H."/>
            <person name="Zabarovsky E."/>
            <person name="Zhu S."/>
            <person name="Zimmer A."/>
            <person name="Hide W."/>
            <person name="Bult C."/>
            <person name="Grimmond S.M."/>
            <person name="Teasdale R.D."/>
            <person name="Liu E.T."/>
            <person name="Brusic V."/>
            <person name="Quackenbush J."/>
            <person name="Wahlestedt C."/>
            <person name="Mattick J.S."/>
            <person name="Hume D.A."/>
            <person name="Kai C."/>
            <person name="Sasaki D."/>
            <person name="Tomaru Y."/>
            <person name="Fukuda S."/>
            <person name="Kanamori-Katayama M."/>
            <person name="Suzuki M."/>
            <person name="Aoki J."/>
            <person name="Arakawa T."/>
            <person name="Iida J."/>
            <person name="Imamura K."/>
            <person name="Itoh M."/>
            <person name="Kato T."/>
            <person name="Kawaji H."/>
            <person name="Kawagashira N."/>
            <person name="Kawashima T."/>
            <person name="Kojima M."/>
            <person name="Kondo S."/>
            <person name="Konno H."/>
            <person name="Nakano K."/>
            <person name="Ninomiya N."/>
            <person name="Nishio T."/>
            <person name="Okada M."/>
            <person name="Plessy C."/>
            <person name="Shibata K."/>
            <person name="Shiraki T."/>
            <person name="Suzuki S."/>
            <person name="Tagami M."/>
            <person name="Waki K."/>
            <person name="Watahiki A."/>
            <person name="Okamura-Oho Y."/>
            <person name="Suzuki H."/>
            <person name="Kawai J."/>
            <person name="Hayashizaki Y."/>
        </authorList>
    </citation>
    <scope>NUCLEOTIDE SEQUENCE [LARGE SCALE MRNA]</scope>
    <source>
        <strain>C57BL/6J</strain>
        <tissue>Skin</tissue>
    </source>
</reference>
<reference key="2">
    <citation type="journal article" date="2004" name="Genome Res.">
        <title>The status, quality, and expansion of the NIH full-length cDNA project: the Mammalian Gene Collection (MGC).</title>
        <authorList>
            <consortium name="The MGC Project Team"/>
        </authorList>
    </citation>
    <scope>NUCLEOTIDE SEQUENCE [LARGE SCALE MRNA]</scope>
    <source>
        <strain>FVB/N</strain>
        <tissue>Mammary tumor</tissue>
    </source>
</reference>
<reference key="3">
    <citation type="journal article" date="2010" name="Cell">
        <title>A tissue-specific atlas of mouse protein phosphorylation and expression.</title>
        <authorList>
            <person name="Huttlin E.L."/>
            <person name="Jedrychowski M.P."/>
            <person name="Elias J.E."/>
            <person name="Goswami T."/>
            <person name="Rad R."/>
            <person name="Beausoleil S.A."/>
            <person name="Villen J."/>
            <person name="Haas W."/>
            <person name="Sowa M.E."/>
            <person name="Gygi S.P."/>
        </authorList>
    </citation>
    <scope>IDENTIFICATION BY MASS SPECTROMETRY [LARGE SCALE ANALYSIS]</scope>
    <source>
        <tissue>Liver</tissue>
    </source>
</reference>
<gene>
    <name type="primary">Sdr42e1</name>
</gene>